<protein>
    <recommendedName>
        <fullName evidence="1">Large ribosomal subunit protein uL23</fullName>
    </recommendedName>
    <alternativeName>
        <fullName evidence="2">50S ribosomal protein L23</fullName>
    </alternativeName>
</protein>
<feature type="chain" id="PRO_0000272801" description="Large ribosomal subunit protein uL23">
    <location>
        <begin position="1"/>
        <end position="102"/>
    </location>
</feature>
<feature type="helix" evidence="3">
    <location>
        <begin position="9"/>
        <end position="11"/>
    </location>
</feature>
<feature type="strand" evidence="3">
    <location>
        <begin position="13"/>
        <end position="16"/>
    </location>
</feature>
<feature type="helix" evidence="3">
    <location>
        <begin position="20"/>
        <end position="25"/>
    </location>
</feature>
<feature type="helix" evidence="3">
    <location>
        <begin position="26"/>
        <end position="28"/>
    </location>
</feature>
<feature type="strand" evidence="3">
    <location>
        <begin position="30"/>
        <end position="35"/>
    </location>
</feature>
<feature type="helix" evidence="3">
    <location>
        <begin position="41"/>
        <end position="52"/>
    </location>
</feature>
<feature type="strand" evidence="3">
    <location>
        <begin position="56"/>
        <end position="64"/>
    </location>
</feature>
<feature type="strand" evidence="3">
    <location>
        <begin position="68"/>
        <end position="71"/>
    </location>
</feature>
<feature type="strand" evidence="3">
    <location>
        <begin position="74"/>
        <end position="77"/>
    </location>
</feature>
<feature type="strand" evidence="3">
    <location>
        <begin position="81"/>
        <end position="88"/>
    </location>
</feature>
<sequence>MSELKIRDPRDIILAPVVSEKSYGLLDQNTYTFVVKPTANKTEIKIAIEQIFGVKVTSVNTMNRKGKVRRTRTGVGKRPDTKRAIVTVAEGDRIDIFTGPVA</sequence>
<organism>
    <name type="scientific">Cutibacterium acnes (strain DSM 16379 / KPA171202)</name>
    <name type="common">Propionibacterium acnes</name>
    <dbReference type="NCBI Taxonomy" id="267747"/>
    <lineage>
        <taxon>Bacteria</taxon>
        <taxon>Bacillati</taxon>
        <taxon>Actinomycetota</taxon>
        <taxon>Actinomycetes</taxon>
        <taxon>Propionibacteriales</taxon>
        <taxon>Propionibacteriaceae</taxon>
        <taxon>Cutibacterium</taxon>
    </lineage>
</organism>
<dbReference type="EMBL" id="AE017283">
    <property type="protein sequence ID" value="AAT83585.1"/>
    <property type="molecule type" value="Genomic_DNA"/>
</dbReference>
<dbReference type="RefSeq" id="WP_002514867.1">
    <property type="nucleotide sequence ID" value="NZ_CP025935.1"/>
</dbReference>
<dbReference type="PDB" id="8CRX">
    <property type="method" value="EM"/>
    <property type="resolution" value="2.78 A"/>
    <property type="chains" value="s=1-102"/>
</dbReference>
<dbReference type="PDB" id="8CVM">
    <property type="method" value="EM"/>
    <property type="resolution" value="2.66 A"/>
    <property type="chains" value="s=1-102"/>
</dbReference>
<dbReference type="PDBsum" id="8CRX"/>
<dbReference type="PDBsum" id="8CVM"/>
<dbReference type="SMR" id="Q6A6M8"/>
<dbReference type="EnsemblBacteria" id="AAT83585">
    <property type="protein sequence ID" value="AAT83585"/>
    <property type="gene ID" value="PPA1861"/>
</dbReference>
<dbReference type="GeneID" id="92857808"/>
<dbReference type="KEGG" id="pac:PPA1861"/>
<dbReference type="eggNOG" id="COG0089">
    <property type="taxonomic scope" value="Bacteria"/>
</dbReference>
<dbReference type="HOGENOM" id="CLU_037562_3_2_11"/>
<dbReference type="Proteomes" id="UP000000603">
    <property type="component" value="Chromosome"/>
</dbReference>
<dbReference type="GO" id="GO:1990904">
    <property type="term" value="C:ribonucleoprotein complex"/>
    <property type="evidence" value="ECO:0007669"/>
    <property type="project" value="UniProtKB-KW"/>
</dbReference>
<dbReference type="GO" id="GO:0005840">
    <property type="term" value="C:ribosome"/>
    <property type="evidence" value="ECO:0007669"/>
    <property type="project" value="UniProtKB-KW"/>
</dbReference>
<dbReference type="GO" id="GO:0019843">
    <property type="term" value="F:rRNA binding"/>
    <property type="evidence" value="ECO:0007669"/>
    <property type="project" value="UniProtKB-UniRule"/>
</dbReference>
<dbReference type="GO" id="GO:0003735">
    <property type="term" value="F:structural constituent of ribosome"/>
    <property type="evidence" value="ECO:0007669"/>
    <property type="project" value="InterPro"/>
</dbReference>
<dbReference type="GO" id="GO:0006412">
    <property type="term" value="P:translation"/>
    <property type="evidence" value="ECO:0007669"/>
    <property type="project" value="UniProtKB-UniRule"/>
</dbReference>
<dbReference type="FunFam" id="3.30.70.330:FF:000001">
    <property type="entry name" value="50S ribosomal protein L23"/>
    <property type="match status" value="1"/>
</dbReference>
<dbReference type="Gene3D" id="3.30.70.330">
    <property type="match status" value="1"/>
</dbReference>
<dbReference type="HAMAP" id="MF_01369_B">
    <property type="entry name" value="Ribosomal_uL23_B"/>
    <property type="match status" value="1"/>
</dbReference>
<dbReference type="InterPro" id="IPR012677">
    <property type="entry name" value="Nucleotide-bd_a/b_plait_sf"/>
</dbReference>
<dbReference type="InterPro" id="IPR013025">
    <property type="entry name" value="Ribosomal_uL23-like"/>
</dbReference>
<dbReference type="InterPro" id="IPR012678">
    <property type="entry name" value="Ribosomal_uL23/eL15/eS24_sf"/>
</dbReference>
<dbReference type="NCBIfam" id="NF004359">
    <property type="entry name" value="PRK05738.1-3"/>
    <property type="match status" value="1"/>
</dbReference>
<dbReference type="NCBIfam" id="NF004363">
    <property type="entry name" value="PRK05738.2-4"/>
    <property type="match status" value="1"/>
</dbReference>
<dbReference type="NCBIfam" id="NF004364">
    <property type="entry name" value="PRK05738.2-5"/>
    <property type="match status" value="1"/>
</dbReference>
<dbReference type="PANTHER" id="PTHR11620">
    <property type="entry name" value="60S RIBOSOMAL PROTEIN L23A"/>
    <property type="match status" value="1"/>
</dbReference>
<dbReference type="Pfam" id="PF00276">
    <property type="entry name" value="Ribosomal_L23"/>
    <property type="match status" value="1"/>
</dbReference>
<dbReference type="SUPFAM" id="SSF54189">
    <property type="entry name" value="Ribosomal proteins S24e, L23 and L15e"/>
    <property type="match status" value="1"/>
</dbReference>
<proteinExistence type="evidence at protein level"/>
<reference key="1">
    <citation type="journal article" date="2004" name="Science">
        <title>The complete genome sequence of Propionibacterium acnes, a commensal of human skin.</title>
        <authorList>
            <person name="Brueggemann H."/>
            <person name="Henne A."/>
            <person name="Hoster F."/>
            <person name="Liesegang H."/>
            <person name="Wiezer A."/>
            <person name="Strittmatter A."/>
            <person name="Hujer S."/>
            <person name="Duerre P."/>
            <person name="Gottschalk G."/>
        </authorList>
    </citation>
    <scope>NUCLEOTIDE SEQUENCE [LARGE SCALE GENOMIC DNA]</scope>
    <source>
        <strain>DSM 16379 / KPA171202</strain>
    </source>
</reference>
<comment type="function">
    <text evidence="1">One of the early assembly proteins it binds 23S rRNA. One of the proteins that surrounds the polypeptide exit tunnel on the outside of the ribosome. Forms the main docking site for trigger factor binding to the ribosome.</text>
</comment>
<comment type="subunit">
    <text evidence="1">Part of the 50S ribosomal subunit. Contacts protein L29, and trigger factor when it is bound to the ribosome.</text>
</comment>
<comment type="similarity">
    <text evidence="1">Belongs to the universal ribosomal protein uL23 family.</text>
</comment>
<keyword id="KW-0002">3D-structure</keyword>
<keyword id="KW-0687">Ribonucleoprotein</keyword>
<keyword id="KW-0689">Ribosomal protein</keyword>
<keyword id="KW-0694">RNA-binding</keyword>
<keyword id="KW-0699">rRNA-binding</keyword>
<evidence type="ECO:0000255" key="1">
    <source>
        <dbReference type="HAMAP-Rule" id="MF_01369"/>
    </source>
</evidence>
<evidence type="ECO:0000305" key="2"/>
<evidence type="ECO:0007829" key="3">
    <source>
        <dbReference type="PDB" id="8CVM"/>
    </source>
</evidence>
<accession>Q6A6M8</accession>
<name>RL23_CUTAK</name>
<gene>
    <name evidence="1" type="primary">rplW</name>
    <name type="ordered locus">PPA1861</name>
</gene>